<comment type="function">
    <text evidence="1">The RuvA-RuvB-RuvC complex processes Holliday junction (HJ) DNA during genetic recombination and DNA repair. Endonuclease that resolves HJ intermediates. Cleaves cruciform DNA by making single-stranded nicks across the HJ at symmetrical positions within the homologous arms, yielding a 5'-phosphate and a 3'-hydroxyl group; requires a central core of homology in the junction. The consensus cleavage sequence is 5'-(A/T)TT(C/G)-3'. Cleavage occurs on the 3'-side of the TT dinucleotide at the point of strand exchange. HJ branch migration catalyzed by RuvA-RuvB allows RuvC to scan DNA until it finds its consensus sequence, where it cleaves and resolves the cruciform DNA.</text>
</comment>
<comment type="catalytic activity">
    <reaction evidence="1">
        <text>Endonucleolytic cleavage at a junction such as a reciprocal single-stranded crossover between two homologous DNA duplexes (Holliday junction).</text>
        <dbReference type="EC" id="3.1.21.10"/>
    </reaction>
</comment>
<comment type="cofactor">
    <cofactor evidence="1">
        <name>Mg(2+)</name>
        <dbReference type="ChEBI" id="CHEBI:18420"/>
    </cofactor>
    <text evidence="1">Binds 2 Mg(2+) ion per subunit.</text>
</comment>
<comment type="subunit">
    <text evidence="1">Homodimer which binds Holliday junction (HJ) DNA. The HJ becomes 2-fold symmetrical on binding to RuvC with unstacked arms; it has a different conformation from HJ DNA in complex with RuvA. In the full resolvosome a probable DNA-RuvA(4)-RuvB(12)-RuvC(2) complex forms which resolves the HJ.</text>
</comment>
<comment type="subcellular location">
    <subcellularLocation>
        <location evidence="1">Cytoplasm</location>
    </subcellularLocation>
</comment>
<comment type="similarity">
    <text evidence="1">Belongs to the RuvC family.</text>
</comment>
<protein>
    <recommendedName>
        <fullName evidence="1">Crossover junction endodeoxyribonuclease RuvC</fullName>
        <ecNumber evidence="1">3.1.21.10</ecNumber>
    </recommendedName>
    <alternativeName>
        <fullName evidence="1">Holliday junction nuclease RuvC</fullName>
    </alternativeName>
    <alternativeName>
        <fullName evidence="1">Holliday junction resolvase RuvC</fullName>
    </alternativeName>
</protein>
<reference key="1">
    <citation type="submission" date="2007-03" db="EMBL/GenBank/DDBJ databases">
        <title>Complete sequence of chromosome 1 of Burkholderia vietnamiensis G4.</title>
        <authorList>
            <consortium name="US DOE Joint Genome Institute"/>
            <person name="Copeland A."/>
            <person name="Lucas S."/>
            <person name="Lapidus A."/>
            <person name="Barry K."/>
            <person name="Detter J.C."/>
            <person name="Glavina del Rio T."/>
            <person name="Hammon N."/>
            <person name="Israni S."/>
            <person name="Dalin E."/>
            <person name="Tice H."/>
            <person name="Pitluck S."/>
            <person name="Chain P."/>
            <person name="Malfatti S."/>
            <person name="Shin M."/>
            <person name="Vergez L."/>
            <person name="Schmutz J."/>
            <person name="Larimer F."/>
            <person name="Land M."/>
            <person name="Hauser L."/>
            <person name="Kyrpides N."/>
            <person name="Tiedje J."/>
            <person name="Richardson P."/>
        </authorList>
    </citation>
    <scope>NUCLEOTIDE SEQUENCE [LARGE SCALE GENOMIC DNA]</scope>
    <source>
        <strain>G4 / LMG 22486</strain>
    </source>
</reference>
<evidence type="ECO:0000255" key="1">
    <source>
        <dbReference type="HAMAP-Rule" id="MF_00034"/>
    </source>
</evidence>
<keyword id="KW-0963">Cytoplasm</keyword>
<keyword id="KW-0227">DNA damage</keyword>
<keyword id="KW-0233">DNA recombination</keyword>
<keyword id="KW-0234">DNA repair</keyword>
<keyword id="KW-0238">DNA-binding</keyword>
<keyword id="KW-0255">Endonuclease</keyword>
<keyword id="KW-0378">Hydrolase</keyword>
<keyword id="KW-0460">Magnesium</keyword>
<keyword id="KW-0479">Metal-binding</keyword>
<keyword id="KW-0540">Nuclease</keyword>
<feature type="chain" id="PRO_1000002733" description="Crossover junction endodeoxyribonuclease RuvC">
    <location>
        <begin position="1"/>
        <end position="180"/>
    </location>
</feature>
<feature type="active site" evidence="1">
    <location>
        <position position="7"/>
    </location>
</feature>
<feature type="active site" evidence="1">
    <location>
        <position position="66"/>
    </location>
</feature>
<feature type="active site" evidence="1">
    <location>
        <position position="138"/>
    </location>
</feature>
<feature type="binding site" evidence="1">
    <location>
        <position position="7"/>
    </location>
    <ligand>
        <name>Mg(2+)</name>
        <dbReference type="ChEBI" id="CHEBI:18420"/>
        <label>1</label>
    </ligand>
</feature>
<feature type="binding site" evidence="1">
    <location>
        <position position="66"/>
    </location>
    <ligand>
        <name>Mg(2+)</name>
        <dbReference type="ChEBI" id="CHEBI:18420"/>
        <label>2</label>
    </ligand>
</feature>
<feature type="binding site" evidence="1">
    <location>
        <position position="138"/>
    </location>
    <ligand>
        <name>Mg(2+)</name>
        <dbReference type="ChEBI" id="CHEBI:18420"/>
        <label>1</label>
    </ligand>
</feature>
<organism>
    <name type="scientific">Burkholderia vietnamiensis (strain G4 / LMG 22486)</name>
    <name type="common">Burkholderia cepacia (strain R1808)</name>
    <dbReference type="NCBI Taxonomy" id="269482"/>
    <lineage>
        <taxon>Bacteria</taxon>
        <taxon>Pseudomonadati</taxon>
        <taxon>Pseudomonadota</taxon>
        <taxon>Betaproteobacteria</taxon>
        <taxon>Burkholderiales</taxon>
        <taxon>Burkholderiaceae</taxon>
        <taxon>Burkholderia</taxon>
        <taxon>Burkholderia cepacia complex</taxon>
    </lineage>
</organism>
<name>RUVC_BURVG</name>
<proteinExistence type="inferred from homology"/>
<dbReference type="EC" id="3.1.21.10" evidence="1"/>
<dbReference type="EMBL" id="CP000614">
    <property type="protein sequence ID" value="ABO53667.1"/>
    <property type="molecule type" value="Genomic_DNA"/>
</dbReference>
<dbReference type="SMR" id="A4JBL4"/>
<dbReference type="KEGG" id="bvi:Bcep1808_0655"/>
<dbReference type="eggNOG" id="COG0817">
    <property type="taxonomic scope" value="Bacteria"/>
</dbReference>
<dbReference type="HOGENOM" id="CLU_091257_2_0_4"/>
<dbReference type="Proteomes" id="UP000002287">
    <property type="component" value="Chromosome 1"/>
</dbReference>
<dbReference type="GO" id="GO:0005737">
    <property type="term" value="C:cytoplasm"/>
    <property type="evidence" value="ECO:0007669"/>
    <property type="project" value="UniProtKB-SubCell"/>
</dbReference>
<dbReference type="GO" id="GO:0048476">
    <property type="term" value="C:Holliday junction resolvase complex"/>
    <property type="evidence" value="ECO:0007669"/>
    <property type="project" value="UniProtKB-UniRule"/>
</dbReference>
<dbReference type="GO" id="GO:0008821">
    <property type="term" value="F:crossover junction DNA endonuclease activity"/>
    <property type="evidence" value="ECO:0007669"/>
    <property type="project" value="UniProtKB-UniRule"/>
</dbReference>
<dbReference type="GO" id="GO:0003677">
    <property type="term" value="F:DNA binding"/>
    <property type="evidence" value="ECO:0007669"/>
    <property type="project" value="UniProtKB-KW"/>
</dbReference>
<dbReference type="GO" id="GO:0000287">
    <property type="term" value="F:magnesium ion binding"/>
    <property type="evidence" value="ECO:0007669"/>
    <property type="project" value="UniProtKB-UniRule"/>
</dbReference>
<dbReference type="GO" id="GO:0006310">
    <property type="term" value="P:DNA recombination"/>
    <property type="evidence" value="ECO:0007669"/>
    <property type="project" value="UniProtKB-UniRule"/>
</dbReference>
<dbReference type="GO" id="GO:0006281">
    <property type="term" value="P:DNA repair"/>
    <property type="evidence" value="ECO:0007669"/>
    <property type="project" value="UniProtKB-UniRule"/>
</dbReference>
<dbReference type="CDD" id="cd16962">
    <property type="entry name" value="RuvC"/>
    <property type="match status" value="1"/>
</dbReference>
<dbReference type="FunFam" id="3.30.420.10:FF:000002">
    <property type="entry name" value="Crossover junction endodeoxyribonuclease RuvC"/>
    <property type="match status" value="1"/>
</dbReference>
<dbReference type="Gene3D" id="3.30.420.10">
    <property type="entry name" value="Ribonuclease H-like superfamily/Ribonuclease H"/>
    <property type="match status" value="1"/>
</dbReference>
<dbReference type="HAMAP" id="MF_00034">
    <property type="entry name" value="RuvC"/>
    <property type="match status" value="1"/>
</dbReference>
<dbReference type="InterPro" id="IPR012337">
    <property type="entry name" value="RNaseH-like_sf"/>
</dbReference>
<dbReference type="InterPro" id="IPR036397">
    <property type="entry name" value="RNaseH_sf"/>
</dbReference>
<dbReference type="InterPro" id="IPR020563">
    <property type="entry name" value="X-over_junc_endoDNase_Mg_BS"/>
</dbReference>
<dbReference type="InterPro" id="IPR002176">
    <property type="entry name" value="X-over_junc_endoDNase_RuvC"/>
</dbReference>
<dbReference type="NCBIfam" id="TIGR00228">
    <property type="entry name" value="ruvC"/>
    <property type="match status" value="1"/>
</dbReference>
<dbReference type="PANTHER" id="PTHR30194">
    <property type="entry name" value="CROSSOVER JUNCTION ENDODEOXYRIBONUCLEASE RUVC"/>
    <property type="match status" value="1"/>
</dbReference>
<dbReference type="PANTHER" id="PTHR30194:SF3">
    <property type="entry name" value="CROSSOVER JUNCTION ENDODEOXYRIBONUCLEASE RUVC"/>
    <property type="match status" value="1"/>
</dbReference>
<dbReference type="Pfam" id="PF02075">
    <property type="entry name" value="RuvC"/>
    <property type="match status" value="1"/>
</dbReference>
<dbReference type="PRINTS" id="PR00696">
    <property type="entry name" value="RSOLVASERUVC"/>
</dbReference>
<dbReference type="SUPFAM" id="SSF53098">
    <property type="entry name" value="Ribonuclease H-like"/>
    <property type="match status" value="1"/>
</dbReference>
<dbReference type="PROSITE" id="PS01321">
    <property type="entry name" value="RUVC"/>
    <property type="match status" value="1"/>
</dbReference>
<gene>
    <name evidence="1" type="primary">ruvC</name>
    <name type="ordered locus">Bcep1808_0655</name>
</gene>
<sequence>MRILGIDPGLRVTGFGVIDVSGHRLAYVASGVIRTPTADLATRLGTIFQGVSTLVREHAPDQAAIEQVFVNVNPQSTLLLGQARGAAICGLVAGGLPVAEYTALQLKQAVVGYGRATKSQMQEMVTRLLNLSGQPGSDAADALGMAICHAHSGNTLGTISGLAPALARKGLRVRRGRLVG</sequence>
<accession>A4JBL4</accession>